<evidence type="ECO:0000255" key="1">
    <source>
        <dbReference type="HAMAP-Rule" id="MF_00473"/>
    </source>
</evidence>
<dbReference type="EC" id="5.3.1.9" evidence="1"/>
<dbReference type="EMBL" id="CR936257">
    <property type="protein sequence ID" value="CAI50587.1"/>
    <property type="molecule type" value="Genomic_DNA"/>
</dbReference>
<dbReference type="RefSeq" id="WP_011324198.1">
    <property type="nucleotide sequence ID" value="NC_007426.1"/>
</dbReference>
<dbReference type="SMR" id="Q3IMS0"/>
<dbReference type="STRING" id="348780.NP_4992A"/>
<dbReference type="EnsemblBacteria" id="CAI50587">
    <property type="protein sequence ID" value="CAI50587"/>
    <property type="gene ID" value="NP_4992A"/>
</dbReference>
<dbReference type="GeneID" id="3703019"/>
<dbReference type="KEGG" id="nph:NP_4992A"/>
<dbReference type="eggNOG" id="arCOG00052">
    <property type="taxonomic scope" value="Archaea"/>
</dbReference>
<dbReference type="HOGENOM" id="CLU_037303_1_0_2"/>
<dbReference type="OrthoDB" id="168618at2157"/>
<dbReference type="UniPathway" id="UPA00109">
    <property type="reaction ID" value="UER00181"/>
</dbReference>
<dbReference type="UniPathway" id="UPA00138"/>
<dbReference type="Proteomes" id="UP000002698">
    <property type="component" value="Chromosome"/>
</dbReference>
<dbReference type="GO" id="GO:0005829">
    <property type="term" value="C:cytosol"/>
    <property type="evidence" value="ECO:0007669"/>
    <property type="project" value="TreeGrafter"/>
</dbReference>
<dbReference type="GO" id="GO:0097367">
    <property type="term" value="F:carbohydrate derivative binding"/>
    <property type="evidence" value="ECO:0007669"/>
    <property type="project" value="InterPro"/>
</dbReference>
<dbReference type="GO" id="GO:0004347">
    <property type="term" value="F:glucose-6-phosphate isomerase activity"/>
    <property type="evidence" value="ECO:0007669"/>
    <property type="project" value="UniProtKB-UniRule"/>
</dbReference>
<dbReference type="GO" id="GO:0048029">
    <property type="term" value="F:monosaccharide binding"/>
    <property type="evidence" value="ECO:0007669"/>
    <property type="project" value="TreeGrafter"/>
</dbReference>
<dbReference type="GO" id="GO:0006094">
    <property type="term" value="P:gluconeogenesis"/>
    <property type="evidence" value="ECO:0007669"/>
    <property type="project" value="UniProtKB-UniRule"/>
</dbReference>
<dbReference type="GO" id="GO:0051156">
    <property type="term" value="P:glucose 6-phosphate metabolic process"/>
    <property type="evidence" value="ECO:0007669"/>
    <property type="project" value="TreeGrafter"/>
</dbReference>
<dbReference type="GO" id="GO:0006096">
    <property type="term" value="P:glycolytic process"/>
    <property type="evidence" value="ECO:0007669"/>
    <property type="project" value="UniProtKB-UniRule"/>
</dbReference>
<dbReference type="CDD" id="cd05015">
    <property type="entry name" value="SIS_PGI_1"/>
    <property type="match status" value="1"/>
</dbReference>
<dbReference type="Gene3D" id="3.40.50.10490">
    <property type="entry name" value="Glucose-6-phosphate isomerase like protein, domain 1"/>
    <property type="match status" value="2"/>
</dbReference>
<dbReference type="HAMAP" id="MF_00473">
    <property type="entry name" value="G6P_isomerase"/>
    <property type="match status" value="1"/>
</dbReference>
<dbReference type="InterPro" id="IPR001672">
    <property type="entry name" value="G6P_Isomerase"/>
</dbReference>
<dbReference type="InterPro" id="IPR018189">
    <property type="entry name" value="Phosphoglucose_isomerase_CS"/>
</dbReference>
<dbReference type="InterPro" id="IPR046348">
    <property type="entry name" value="SIS_dom_sf"/>
</dbReference>
<dbReference type="InterPro" id="IPR035476">
    <property type="entry name" value="SIS_PGI_1"/>
</dbReference>
<dbReference type="PANTHER" id="PTHR11469">
    <property type="entry name" value="GLUCOSE-6-PHOSPHATE ISOMERASE"/>
    <property type="match status" value="1"/>
</dbReference>
<dbReference type="PANTHER" id="PTHR11469:SF1">
    <property type="entry name" value="GLUCOSE-6-PHOSPHATE ISOMERASE"/>
    <property type="match status" value="1"/>
</dbReference>
<dbReference type="Pfam" id="PF00342">
    <property type="entry name" value="PGI"/>
    <property type="match status" value="1"/>
</dbReference>
<dbReference type="PRINTS" id="PR00662">
    <property type="entry name" value="G6PISOMERASE"/>
</dbReference>
<dbReference type="SUPFAM" id="SSF53697">
    <property type="entry name" value="SIS domain"/>
    <property type="match status" value="1"/>
</dbReference>
<dbReference type="PROSITE" id="PS00765">
    <property type="entry name" value="P_GLUCOSE_ISOMERASE_1"/>
    <property type="match status" value="1"/>
</dbReference>
<dbReference type="PROSITE" id="PS00174">
    <property type="entry name" value="P_GLUCOSE_ISOMERASE_2"/>
    <property type="match status" value="1"/>
</dbReference>
<dbReference type="PROSITE" id="PS51463">
    <property type="entry name" value="P_GLUCOSE_ISOMERASE_3"/>
    <property type="match status" value="1"/>
</dbReference>
<reference key="1">
    <citation type="journal article" date="2005" name="Genome Res.">
        <title>Living with two extremes: conclusions from the genome sequence of Natronomonas pharaonis.</title>
        <authorList>
            <person name="Falb M."/>
            <person name="Pfeiffer F."/>
            <person name="Palm P."/>
            <person name="Rodewald K."/>
            <person name="Hickmann V."/>
            <person name="Tittor J."/>
            <person name="Oesterhelt D."/>
        </authorList>
    </citation>
    <scope>NUCLEOTIDE SEQUENCE [LARGE SCALE GENOMIC DNA]</scope>
    <source>
        <strain>ATCC 35678 / DSM 2160 / CIP 103997 / JCM 8858 / NBRC 14720 / NCIMB 2260 / Gabara</strain>
    </source>
</reference>
<comment type="function">
    <text evidence="1">Catalyzes the reversible isomerization of glucose-6-phosphate to fructose-6-phosphate.</text>
</comment>
<comment type="catalytic activity">
    <reaction evidence="1">
        <text>alpha-D-glucose 6-phosphate = beta-D-fructose 6-phosphate</text>
        <dbReference type="Rhea" id="RHEA:11816"/>
        <dbReference type="ChEBI" id="CHEBI:57634"/>
        <dbReference type="ChEBI" id="CHEBI:58225"/>
        <dbReference type="EC" id="5.3.1.9"/>
    </reaction>
</comment>
<comment type="pathway">
    <text evidence="1">Carbohydrate biosynthesis; gluconeogenesis.</text>
</comment>
<comment type="pathway">
    <text evidence="1">Carbohydrate degradation; glycolysis; D-glyceraldehyde 3-phosphate and glycerone phosphate from D-glucose: step 2/4.</text>
</comment>
<comment type="subcellular location">
    <subcellularLocation>
        <location evidence="1">Cytoplasm</location>
    </subcellularLocation>
</comment>
<comment type="similarity">
    <text evidence="1">Belongs to the GPI family.</text>
</comment>
<protein>
    <recommendedName>
        <fullName evidence="1">Probable glucose-6-phosphate isomerase</fullName>
        <shortName evidence="1">GPI</shortName>
        <ecNumber evidence="1">5.3.1.9</ecNumber>
    </recommendedName>
    <alternativeName>
        <fullName evidence="1">Phosphoglucose isomerase</fullName>
        <shortName evidence="1">PGI</shortName>
    </alternativeName>
    <alternativeName>
        <fullName evidence="1">Phosphohexose isomerase</fullName>
        <shortName evidence="1">PHI</shortName>
    </alternativeName>
</protein>
<sequence>MNVDFGNALAAEAVTGVSEASLERLDDRVADAHDRIEANIEARRFGYASLALPTDTDPDAIYEAVSGFDPEAVLTVGIGGSALGAETITAALGAESHYTLDNVDPAPTRQLLDELPLSSTLVNVVSRSGTTAETLANFLVVREAMADAGVDWTDRTVVTTGAEGPLRTLADAHDLPSCTVPEGVPGRFSALSAVGLLPAAALGCDIEAVLAGGAAGRESLAPSLFESPAYAYGAVAYATEQRGATTNAIVPYAEQLEPFAEWFAQLWAESLGKDGLGQTPARALGATDQHSQLQLYRAGRKDKLVTLVRPRERAGVDIPETDIDALSYLGGESLESLLDAEFEATEASLAAAGQPNVRIELDSLDAHGVGELLYGMEAACILYGELLGIETFTQPAVEWGKRAARGLLGGGDFEEAEAVADKTVRRVE</sequence>
<keyword id="KW-0963">Cytoplasm</keyword>
<keyword id="KW-0312">Gluconeogenesis</keyword>
<keyword id="KW-0324">Glycolysis</keyword>
<keyword id="KW-0413">Isomerase</keyword>
<keyword id="KW-1185">Reference proteome</keyword>
<name>G6PI_NATPD</name>
<feature type="chain" id="PRO_0000230944" description="Probable glucose-6-phosphate isomerase">
    <location>
        <begin position="1"/>
        <end position="428"/>
    </location>
</feature>
<feature type="active site" description="Proton donor" evidence="1">
    <location>
        <position position="269"/>
    </location>
</feature>
<feature type="active site" evidence="1">
    <location>
        <position position="290"/>
    </location>
</feature>
<feature type="active site" evidence="1">
    <location>
        <position position="401"/>
    </location>
</feature>
<accession>Q3IMS0</accession>
<gene>
    <name evidence="1" type="primary">pgi</name>
    <name type="ordered locus">NP_4992A</name>
</gene>
<proteinExistence type="inferred from homology"/>
<organism>
    <name type="scientific">Natronomonas pharaonis (strain ATCC 35678 / DSM 2160 / CIP 103997 / JCM 8858 / NBRC 14720 / NCIMB 2260 / Gabara)</name>
    <name type="common">Halobacterium pharaonis</name>
    <dbReference type="NCBI Taxonomy" id="348780"/>
    <lineage>
        <taxon>Archaea</taxon>
        <taxon>Methanobacteriati</taxon>
        <taxon>Methanobacteriota</taxon>
        <taxon>Stenosarchaea group</taxon>
        <taxon>Halobacteria</taxon>
        <taxon>Halobacteriales</taxon>
        <taxon>Haloarculaceae</taxon>
        <taxon>Natronomonas</taxon>
    </lineage>
</organism>